<accession>C4K3F0</accession>
<protein>
    <recommendedName>
        <fullName evidence="2">Translation initiation factor IF-2</fullName>
    </recommendedName>
</protein>
<gene>
    <name evidence="2" type="primary">infB</name>
    <name type="ordered locus">HDEF_0331</name>
</gene>
<sequence>MTDVTVKSLAEEIKTSVDRLVQQFFDAGIKKSQTDTVTQQEKEKLLAHLNRQQGTVDNQLTLQRKTRSVLNIQVTGGKSKTVHIEVRKKRTYVNPSVTKPEAPLPEEENAQIPKITKNTFSQESLNKTSPQKSLKTKAIEKAKIESPKKERHSLKEKQKKEAQSEKARREAEASSLKRFAEEEVRRKVEEEAKRVAEQARKMAIENEAKWSELVADQIDSVDYHVTTSEHARAAEDENDAKVEGDRRSRHRGTKTTKQKKTNKLSESKTDREEARAVVRKSKRKPSALQQSFNKPVVALNRDVVIGETISVAELANKMAVKGSQVIKAMMKLGAMATINQVIDQETAQLVAEEMGHKVILRRENELEEALMSDRDTGVLTVHRAPVVTIMGHVDHGKTSLLDYIRSTKVATGEAGGITQHIGAYHVETENGMITFLDTPGHAAFTSMRARGAQATDIVVLVVAADDGVMPQTIEAIQHAKAAKVPVVVAVNKIDKAEADPDRVKKELIQHGIQPEEWGGDSQFIHVSAKVGTGIDDLLNAILLQAEVLELKAVKSGMANGVVIESFLDKGRGPVATVLVQEGTLNKGDIVLCGFQYGRVRAMRNELGREVISAGPSIPVEILGLSSVSSAGDAVTVVRDEKKAREVALYRQGKFREIKLARQQKSKLENMFDSLREGEISELNIVLKSDVQGSCEAIREALQKLSTDEVKIKIIGSGVGGITETDATLAAASNAIILGFNVRADAATRRLVEAENLNLRYYSVIYDLLDEVKQAMSGMLSPKYEQKIIGLAEVRDVFKSPKFGAIAGCMVVEGLIKRSSPIRVLRNNVVIYEGELESLRRFKDDVNEVRNGIECGIGVKNYDVQVNDTIEVFEIIEIKRTIS</sequence>
<feature type="chain" id="PRO_1000202777" description="Translation initiation factor IF-2">
    <location>
        <begin position="1"/>
        <end position="882"/>
    </location>
</feature>
<feature type="domain" description="tr-type G">
    <location>
        <begin position="382"/>
        <end position="551"/>
    </location>
</feature>
<feature type="region of interest" description="Disordered" evidence="3">
    <location>
        <begin position="95"/>
        <end position="176"/>
    </location>
</feature>
<feature type="region of interest" description="Disordered" evidence="3">
    <location>
        <begin position="229"/>
        <end position="289"/>
    </location>
</feature>
<feature type="region of interest" description="G1" evidence="1">
    <location>
        <begin position="391"/>
        <end position="398"/>
    </location>
</feature>
<feature type="region of interest" description="G2" evidence="1">
    <location>
        <begin position="416"/>
        <end position="420"/>
    </location>
</feature>
<feature type="region of interest" description="G3" evidence="1">
    <location>
        <begin position="437"/>
        <end position="440"/>
    </location>
</feature>
<feature type="region of interest" description="G4" evidence="1">
    <location>
        <begin position="491"/>
        <end position="494"/>
    </location>
</feature>
<feature type="region of interest" description="G5" evidence="1">
    <location>
        <begin position="527"/>
        <end position="529"/>
    </location>
</feature>
<feature type="compositionally biased region" description="Polar residues" evidence="3">
    <location>
        <begin position="116"/>
        <end position="133"/>
    </location>
</feature>
<feature type="compositionally biased region" description="Basic and acidic residues" evidence="3">
    <location>
        <begin position="137"/>
        <end position="172"/>
    </location>
</feature>
<feature type="compositionally biased region" description="Basic and acidic residues" evidence="3">
    <location>
        <begin position="229"/>
        <end position="246"/>
    </location>
</feature>
<feature type="compositionally biased region" description="Basic residues" evidence="3">
    <location>
        <begin position="247"/>
        <end position="262"/>
    </location>
</feature>
<feature type="compositionally biased region" description="Basic and acidic residues" evidence="3">
    <location>
        <begin position="263"/>
        <end position="276"/>
    </location>
</feature>
<feature type="binding site" evidence="2">
    <location>
        <begin position="391"/>
        <end position="398"/>
    </location>
    <ligand>
        <name>GTP</name>
        <dbReference type="ChEBI" id="CHEBI:37565"/>
    </ligand>
</feature>
<feature type="binding site" evidence="2">
    <location>
        <begin position="437"/>
        <end position="441"/>
    </location>
    <ligand>
        <name>GTP</name>
        <dbReference type="ChEBI" id="CHEBI:37565"/>
    </ligand>
</feature>
<feature type="binding site" evidence="2">
    <location>
        <begin position="491"/>
        <end position="494"/>
    </location>
    <ligand>
        <name>GTP</name>
        <dbReference type="ChEBI" id="CHEBI:37565"/>
    </ligand>
</feature>
<comment type="function">
    <text evidence="2">One of the essential components for the initiation of protein synthesis. Protects formylmethionyl-tRNA from spontaneous hydrolysis and promotes its binding to the 30S ribosomal subunits. Also involved in the hydrolysis of GTP during the formation of the 70S ribosomal complex.</text>
</comment>
<comment type="subcellular location">
    <subcellularLocation>
        <location evidence="2">Cytoplasm</location>
    </subcellularLocation>
</comment>
<comment type="similarity">
    <text evidence="2">Belongs to the TRAFAC class translation factor GTPase superfamily. Classic translation factor GTPase family. IF-2 subfamily.</text>
</comment>
<name>IF2_HAMD5</name>
<evidence type="ECO:0000250" key="1"/>
<evidence type="ECO:0000255" key="2">
    <source>
        <dbReference type="HAMAP-Rule" id="MF_00100"/>
    </source>
</evidence>
<evidence type="ECO:0000256" key="3">
    <source>
        <dbReference type="SAM" id="MobiDB-lite"/>
    </source>
</evidence>
<proteinExistence type="inferred from homology"/>
<keyword id="KW-0963">Cytoplasm</keyword>
<keyword id="KW-0342">GTP-binding</keyword>
<keyword id="KW-0396">Initiation factor</keyword>
<keyword id="KW-0547">Nucleotide-binding</keyword>
<keyword id="KW-0648">Protein biosynthesis</keyword>
<reference key="1">
    <citation type="journal article" date="2009" name="Proc. Natl. Acad. Sci. U.S.A.">
        <title>Hamiltonella defensa, genome evolution of protective bacterial endosymbiont from pathogenic ancestors.</title>
        <authorList>
            <person name="Degnan P.H."/>
            <person name="Yu Y."/>
            <person name="Sisneros N."/>
            <person name="Wing R.A."/>
            <person name="Moran N.A."/>
        </authorList>
    </citation>
    <scope>NUCLEOTIDE SEQUENCE [LARGE SCALE GENOMIC DNA]</scope>
    <source>
        <strain>5AT</strain>
    </source>
</reference>
<dbReference type="EMBL" id="CP001277">
    <property type="protein sequence ID" value="ACQ67093.1"/>
    <property type="molecule type" value="Genomic_DNA"/>
</dbReference>
<dbReference type="RefSeq" id="WP_012738054.1">
    <property type="nucleotide sequence ID" value="NC_012751.1"/>
</dbReference>
<dbReference type="SMR" id="C4K3F0"/>
<dbReference type="STRING" id="572265.HDEF_0331"/>
<dbReference type="GeneID" id="66260246"/>
<dbReference type="KEGG" id="hde:HDEF_0331"/>
<dbReference type="eggNOG" id="COG0532">
    <property type="taxonomic scope" value="Bacteria"/>
</dbReference>
<dbReference type="HOGENOM" id="CLU_006301_6_3_6"/>
<dbReference type="Proteomes" id="UP000002334">
    <property type="component" value="Chromosome"/>
</dbReference>
<dbReference type="GO" id="GO:0005829">
    <property type="term" value="C:cytosol"/>
    <property type="evidence" value="ECO:0007669"/>
    <property type="project" value="TreeGrafter"/>
</dbReference>
<dbReference type="GO" id="GO:0005525">
    <property type="term" value="F:GTP binding"/>
    <property type="evidence" value="ECO:0007669"/>
    <property type="project" value="UniProtKB-KW"/>
</dbReference>
<dbReference type="GO" id="GO:0003924">
    <property type="term" value="F:GTPase activity"/>
    <property type="evidence" value="ECO:0007669"/>
    <property type="project" value="UniProtKB-UniRule"/>
</dbReference>
<dbReference type="GO" id="GO:0003743">
    <property type="term" value="F:translation initiation factor activity"/>
    <property type="evidence" value="ECO:0007669"/>
    <property type="project" value="UniProtKB-UniRule"/>
</dbReference>
<dbReference type="CDD" id="cd01887">
    <property type="entry name" value="IF2_eIF5B"/>
    <property type="match status" value="1"/>
</dbReference>
<dbReference type="CDD" id="cd03702">
    <property type="entry name" value="IF2_mtIF2_II"/>
    <property type="match status" value="1"/>
</dbReference>
<dbReference type="CDD" id="cd03692">
    <property type="entry name" value="mtIF2_IVc"/>
    <property type="match status" value="1"/>
</dbReference>
<dbReference type="FunFam" id="2.40.30.10:FF:000007">
    <property type="entry name" value="Translation initiation factor IF-2"/>
    <property type="match status" value="1"/>
</dbReference>
<dbReference type="FunFam" id="2.40.30.10:FF:000008">
    <property type="entry name" value="Translation initiation factor IF-2"/>
    <property type="match status" value="1"/>
</dbReference>
<dbReference type="FunFam" id="3.30.56.50:FF:000001">
    <property type="entry name" value="Translation initiation factor IF-2"/>
    <property type="match status" value="1"/>
</dbReference>
<dbReference type="FunFam" id="3.40.50.10050:FF:000001">
    <property type="entry name" value="Translation initiation factor IF-2"/>
    <property type="match status" value="1"/>
</dbReference>
<dbReference type="FunFam" id="3.40.50.300:FF:000019">
    <property type="entry name" value="Translation initiation factor IF-2"/>
    <property type="match status" value="1"/>
</dbReference>
<dbReference type="Gene3D" id="3.40.50.300">
    <property type="entry name" value="P-loop containing nucleotide triphosphate hydrolases"/>
    <property type="match status" value="1"/>
</dbReference>
<dbReference type="Gene3D" id="3.30.56.50">
    <property type="entry name" value="Putative DNA-binding domain, N-terminal subdomain of bacterial translation initiation factor IF2"/>
    <property type="match status" value="1"/>
</dbReference>
<dbReference type="Gene3D" id="2.40.30.10">
    <property type="entry name" value="Translation factors"/>
    <property type="match status" value="2"/>
</dbReference>
<dbReference type="Gene3D" id="3.40.50.10050">
    <property type="entry name" value="Translation initiation factor IF- 2, domain 3"/>
    <property type="match status" value="1"/>
</dbReference>
<dbReference type="HAMAP" id="MF_00100_B">
    <property type="entry name" value="IF_2_B"/>
    <property type="match status" value="1"/>
</dbReference>
<dbReference type="InterPro" id="IPR009061">
    <property type="entry name" value="DNA-bd_dom_put_sf"/>
</dbReference>
<dbReference type="InterPro" id="IPR053905">
    <property type="entry name" value="EF-G-like_DII"/>
</dbReference>
<dbReference type="InterPro" id="IPR013575">
    <property type="entry name" value="IF2_assoc_dom_bac"/>
</dbReference>
<dbReference type="InterPro" id="IPR044145">
    <property type="entry name" value="IF2_II"/>
</dbReference>
<dbReference type="InterPro" id="IPR006847">
    <property type="entry name" value="IF2_N"/>
</dbReference>
<dbReference type="InterPro" id="IPR027417">
    <property type="entry name" value="P-loop_NTPase"/>
</dbReference>
<dbReference type="InterPro" id="IPR005225">
    <property type="entry name" value="Small_GTP-bd"/>
</dbReference>
<dbReference type="InterPro" id="IPR000795">
    <property type="entry name" value="T_Tr_GTP-bd_dom"/>
</dbReference>
<dbReference type="InterPro" id="IPR000178">
    <property type="entry name" value="TF_IF2_bacterial-like"/>
</dbReference>
<dbReference type="InterPro" id="IPR015760">
    <property type="entry name" value="TIF_IF2"/>
</dbReference>
<dbReference type="InterPro" id="IPR023115">
    <property type="entry name" value="TIF_IF2_dom3"/>
</dbReference>
<dbReference type="InterPro" id="IPR036925">
    <property type="entry name" value="TIF_IF2_dom3_sf"/>
</dbReference>
<dbReference type="InterPro" id="IPR009000">
    <property type="entry name" value="Transl_B-barrel_sf"/>
</dbReference>
<dbReference type="NCBIfam" id="TIGR00487">
    <property type="entry name" value="IF-2"/>
    <property type="match status" value="1"/>
</dbReference>
<dbReference type="NCBIfam" id="TIGR00231">
    <property type="entry name" value="small_GTP"/>
    <property type="match status" value="1"/>
</dbReference>
<dbReference type="PANTHER" id="PTHR43381:SF5">
    <property type="entry name" value="TR-TYPE G DOMAIN-CONTAINING PROTEIN"/>
    <property type="match status" value="1"/>
</dbReference>
<dbReference type="PANTHER" id="PTHR43381">
    <property type="entry name" value="TRANSLATION INITIATION FACTOR IF-2-RELATED"/>
    <property type="match status" value="1"/>
</dbReference>
<dbReference type="Pfam" id="PF22042">
    <property type="entry name" value="EF-G_D2"/>
    <property type="match status" value="1"/>
</dbReference>
<dbReference type="Pfam" id="PF00009">
    <property type="entry name" value="GTP_EFTU"/>
    <property type="match status" value="1"/>
</dbReference>
<dbReference type="Pfam" id="PF11987">
    <property type="entry name" value="IF-2"/>
    <property type="match status" value="1"/>
</dbReference>
<dbReference type="Pfam" id="PF08364">
    <property type="entry name" value="IF2_assoc"/>
    <property type="match status" value="1"/>
</dbReference>
<dbReference type="Pfam" id="PF04760">
    <property type="entry name" value="IF2_N"/>
    <property type="match status" value="2"/>
</dbReference>
<dbReference type="SUPFAM" id="SSF52156">
    <property type="entry name" value="Initiation factor IF2/eIF5b, domain 3"/>
    <property type="match status" value="1"/>
</dbReference>
<dbReference type="SUPFAM" id="SSF52540">
    <property type="entry name" value="P-loop containing nucleoside triphosphate hydrolases"/>
    <property type="match status" value="1"/>
</dbReference>
<dbReference type="SUPFAM" id="SSF46955">
    <property type="entry name" value="Putative DNA-binding domain"/>
    <property type="match status" value="1"/>
</dbReference>
<dbReference type="SUPFAM" id="SSF50447">
    <property type="entry name" value="Translation proteins"/>
    <property type="match status" value="2"/>
</dbReference>
<dbReference type="PROSITE" id="PS51722">
    <property type="entry name" value="G_TR_2"/>
    <property type="match status" value="1"/>
</dbReference>
<dbReference type="PROSITE" id="PS01176">
    <property type="entry name" value="IF2"/>
    <property type="match status" value="1"/>
</dbReference>
<organism>
    <name type="scientific">Hamiltonella defensa subsp. Acyrthosiphon pisum (strain 5AT)</name>
    <dbReference type="NCBI Taxonomy" id="572265"/>
    <lineage>
        <taxon>Bacteria</taxon>
        <taxon>Pseudomonadati</taxon>
        <taxon>Pseudomonadota</taxon>
        <taxon>Gammaproteobacteria</taxon>
        <taxon>Enterobacterales</taxon>
        <taxon>Enterobacteriaceae</taxon>
        <taxon>aphid secondary symbionts</taxon>
        <taxon>Candidatus Hamiltonella</taxon>
    </lineage>
</organism>